<dbReference type="EMBL" id="AF271389">
    <property type="protein sequence ID" value="AAF76200.1"/>
    <property type="molecule type" value="mRNA"/>
</dbReference>
<dbReference type="EMBL" id="AF070070">
    <property type="protein sequence ID" value="AAC70065.1"/>
    <property type="molecule type" value="mRNA"/>
</dbReference>
<dbReference type="EMBL" id="BX284604">
    <property type="protein sequence ID" value="CAA98059.2"/>
    <property type="molecule type" value="Genomic_DNA"/>
</dbReference>
<dbReference type="EMBL" id="BX284604">
    <property type="protein sequence ID" value="CDR32661.1"/>
    <property type="molecule type" value="Genomic_DNA"/>
</dbReference>
<dbReference type="PIR" id="T20659">
    <property type="entry name" value="T20659"/>
</dbReference>
<dbReference type="PIR" id="T20660">
    <property type="entry name" value="T20660"/>
</dbReference>
<dbReference type="PIR" id="T43201">
    <property type="entry name" value="T43201"/>
</dbReference>
<dbReference type="RefSeq" id="NP_001293899.1">
    <property type="nucleotide sequence ID" value="NM_001306970.1"/>
</dbReference>
<dbReference type="RefSeq" id="NP_001368472.1">
    <molecule id="Q19272-2"/>
    <property type="nucleotide sequence ID" value="NM_001380506.1"/>
</dbReference>
<dbReference type="RefSeq" id="NP_502531.1">
    <molecule id="Q19272-1"/>
    <property type="nucleotide sequence ID" value="NM_070130.8"/>
</dbReference>
<dbReference type="SMR" id="Q19272"/>
<dbReference type="BioGRID" id="43359">
    <property type="interactions" value="4"/>
</dbReference>
<dbReference type="FunCoup" id="Q19272">
    <property type="interactions" value="705"/>
</dbReference>
<dbReference type="STRING" id="6239.F09E8.3a.1"/>
<dbReference type="PaxDb" id="6239-F09E8.3"/>
<dbReference type="EnsemblMetazoa" id="F09E8.3a.1">
    <molecule id="Q19272-1"/>
    <property type="protein sequence ID" value="F09E8.3a.1"/>
    <property type="gene ID" value="WBGene00003421"/>
</dbReference>
<dbReference type="EnsemblMetazoa" id="F09E8.3b.1">
    <molecule id="Q19272-2"/>
    <property type="protein sequence ID" value="F09E8.3b.1"/>
    <property type="gene ID" value="WBGene00003421"/>
</dbReference>
<dbReference type="GeneID" id="178268"/>
<dbReference type="KEGG" id="cel:CELE_F09E8.3"/>
<dbReference type="UCSC" id="F09E8.3">
    <molecule id="Q19272-1"/>
    <property type="organism name" value="c. elegans"/>
</dbReference>
<dbReference type="AGR" id="WB:WBGene00003421"/>
<dbReference type="CTD" id="178268"/>
<dbReference type="WormBase" id="F09E8.3a">
    <molecule id="Q19272-1"/>
    <property type="protein sequence ID" value="CE26678"/>
    <property type="gene ID" value="WBGene00003421"/>
    <property type="gene designation" value="msh-5"/>
</dbReference>
<dbReference type="WormBase" id="F09E8.3b">
    <molecule id="Q19272-2"/>
    <property type="protein sequence ID" value="CE49987"/>
    <property type="gene ID" value="WBGene00003421"/>
    <property type="gene designation" value="msh-5"/>
</dbReference>
<dbReference type="eggNOG" id="KOG0221">
    <property type="taxonomic scope" value="Eukaryota"/>
</dbReference>
<dbReference type="GeneTree" id="ENSGT00550000074977"/>
<dbReference type="HOGENOM" id="CLU_004671_0_0_1"/>
<dbReference type="InParanoid" id="Q19272"/>
<dbReference type="OMA" id="ACRIYKA"/>
<dbReference type="OrthoDB" id="29596at2759"/>
<dbReference type="PhylomeDB" id="Q19272"/>
<dbReference type="PRO" id="PR:Q19272"/>
<dbReference type="Proteomes" id="UP000001940">
    <property type="component" value="Chromosome IV"/>
</dbReference>
<dbReference type="Bgee" id="WBGene00003421">
    <property type="expression patterns" value="Expressed in germ line (C elegans) and 3 other cell types or tissues"/>
</dbReference>
<dbReference type="ExpressionAtlas" id="Q19272">
    <property type="expression patterns" value="baseline and differential"/>
</dbReference>
<dbReference type="GO" id="GO:0005694">
    <property type="term" value="C:chromosome"/>
    <property type="evidence" value="ECO:0007669"/>
    <property type="project" value="UniProtKB-SubCell"/>
</dbReference>
<dbReference type="GO" id="GO:0005634">
    <property type="term" value="C:nucleus"/>
    <property type="evidence" value="ECO:0000315"/>
    <property type="project" value="UniProtKB"/>
</dbReference>
<dbReference type="GO" id="GO:0005524">
    <property type="term" value="F:ATP binding"/>
    <property type="evidence" value="ECO:0007669"/>
    <property type="project" value="UniProtKB-KW"/>
</dbReference>
<dbReference type="GO" id="GO:0140664">
    <property type="term" value="F:ATP-dependent DNA damage sensor activity"/>
    <property type="evidence" value="ECO:0007669"/>
    <property type="project" value="InterPro"/>
</dbReference>
<dbReference type="GO" id="GO:0003690">
    <property type="term" value="F:double-stranded DNA binding"/>
    <property type="evidence" value="ECO:0000318"/>
    <property type="project" value="GO_Central"/>
</dbReference>
<dbReference type="GO" id="GO:0030983">
    <property type="term" value="F:mismatched DNA binding"/>
    <property type="evidence" value="ECO:0007669"/>
    <property type="project" value="InterPro"/>
</dbReference>
<dbReference type="GO" id="GO:0051026">
    <property type="term" value="P:chiasma assembly"/>
    <property type="evidence" value="ECO:0000315"/>
    <property type="project" value="WormBase"/>
</dbReference>
<dbReference type="GO" id="GO:0045143">
    <property type="term" value="P:homologous chromosome segregation"/>
    <property type="evidence" value="ECO:0000315"/>
    <property type="project" value="WormBase"/>
</dbReference>
<dbReference type="GO" id="GO:0006298">
    <property type="term" value="P:mismatch repair"/>
    <property type="evidence" value="ECO:0007669"/>
    <property type="project" value="InterPro"/>
</dbReference>
<dbReference type="GO" id="GO:0007131">
    <property type="term" value="P:reciprocal meiotic recombination"/>
    <property type="evidence" value="ECO:0000315"/>
    <property type="project" value="UniProtKB"/>
</dbReference>
<dbReference type="CDD" id="cd03281">
    <property type="entry name" value="ABC_MSH5_euk"/>
    <property type="match status" value="1"/>
</dbReference>
<dbReference type="FunFam" id="3.40.50.300:FF:000870">
    <property type="entry name" value="MutS protein homolog 4"/>
    <property type="match status" value="1"/>
</dbReference>
<dbReference type="Gene3D" id="1.10.1420.10">
    <property type="match status" value="1"/>
</dbReference>
<dbReference type="Gene3D" id="3.40.50.300">
    <property type="entry name" value="P-loop containing nucleotide triphosphate hydrolases"/>
    <property type="match status" value="1"/>
</dbReference>
<dbReference type="InterPro" id="IPR000432">
    <property type="entry name" value="DNA_mismatch_repair_MutS_C"/>
</dbReference>
<dbReference type="InterPro" id="IPR007861">
    <property type="entry name" value="DNA_mismatch_repair_MutS_clamp"/>
</dbReference>
<dbReference type="InterPro" id="IPR007696">
    <property type="entry name" value="DNA_mismatch_repair_MutS_core"/>
</dbReference>
<dbReference type="InterPro" id="IPR036187">
    <property type="entry name" value="DNA_mismatch_repair_MutS_sf"/>
</dbReference>
<dbReference type="InterPro" id="IPR045076">
    <property type="entry name" value="MutS"/>
</dbReference>
<dbReference type="InterPro" id="IPR027417">
    <property type="entry name" value="P-loop_NTPase"/>
</dbReference>
<dbReference type="PANTHER" id="PTHR11361">
    <property type="entry name" value="DNA MISMATCH REPAIR PROTEIN MUTS FAMILY MEMBER"/>
    <property type="match status" value="1"/>
</dbReference>
<dbReference type="PANTHER" id="PTHR11361:SF20">
    <property type="entry name" value="MUTS PROTEIN HOMOLOG 5"/>
    <property type="match status" value="1"/>
</dbReference>
<dbReference type="Pfam" id="PF05192">
    <property type="entry name" value="MutS_III"/>
    <property type="match status" value="1"/>
</dbReference>
<dbReference type="Pfam" id="PF05190">
    <property type="entry name" value="MutS_IV"/>
    <property type="match status" value="1"/>
</dbReference>
<dbReference type="Pfam" id="PF00488">
    <property type="entry name" value="MutS_V"/>
    <property type="match status" value="1"/>
</dbReference>
<dbReference type="SMART" id="SM00534">
    <property type="entry name" value="MUTSac"/>
    <property type="match status" value="1"/>
</dbReference>
<dbReference type="SMART" id="SM00533">
    <property type="entry name" value="MUTSd"/>
    <property type="match status" value="1"/>
</dbReference>
<dbReference type="SUPFAM" id="SSF48334">
    <property type="entry name" value="DNA repair protein MutS, domain III"/>
    <property type="match status" value="1"/>
</dbReference>
<dbReference type="SUPFAM" id="SSF52540">
    <property type="entry name" value="P-loop containing nucleoside triphosphate hydrolases"/>
    <property type="match status" value="1"/>
</dbReference>
<dbReference type="PROSITE" id="PS00486">
    <property type="entry name" value="DNA_MISMATCH_REPAIR_2"/>
    <property type="match status" value="1"/>
</dbReference>
<comment type="function">
    <text evidence="4 5">Crucial component in meiotic recombination, functioning at some point after the initiation step of recombination. Plays a role in promoting the crossover outcome of meiotic recombination events. Required for formation of normal meiotic crossover, and crossover and chiasmata generated by artificially made DNA breaks. Together with him-14 and zhp-3 plays a role in the activation of DNA damage-dependent apoptosis at the DNA damage checkpoint in pachytene cells (PubMed:23832114).</text>
</comment>
<comment type="subunit">
    <text evidence="1 8">Heterooligomer of him-14 and msh-5 (By similarity). Interacts with the brc-1-brd-1 heterodimer (PubMed:30383754).</text>
</comment>
<comment type="subcellular location">
    <subcellularLocation>
        <location evidence="6 7">Chromosome</location>
    </subcellularLocation>
    <text evidence="6 7 8">From mid-pachytene, co-localizes with cosa-1 and rmh-1 at crossover sites of early recombination intermediates (PubMed:29521627, PubMed:30379819). Co-localizes with brc-1 at crossover sites in mid-late pachytene nuclei (PubMed:30383754).</text>
</comment>
<comment type="alternative products">
    <event type="alternative splicing"/>
    <isoform>
        <id>Q19272-1</id>
        <name evidence="10">a</name>
        <sequence type="displayed"/>
    </isoform>
    <isoform>
        <id>Q19272-2</id>
        <name evidence="11">b</name>
        <sequence type="described" ref="VSP_060676"/>
    </isoform>
</comment>
<comment type="tissue specificity">
    <text evidence="6">Expressed in the germline.</text>
</comment>
<comment type="similarity">
    <text evidence="9">Belongs to the DNA mismatch repair MutS family.</text>
</comment>
<reference key="1">
    <citation type="journal article" date="2000" name="Genetics">
        <title>Caenorhabditis elegans msh-5 is required for both normal and radiation-induced meiotic crossing over but not for completion of meiosis.</title>
        <authorList>
            <person name="Kelly K.O."/>
            <person name="Dernburg A.F."/>
            <person name="Stanfield G.M."/>
            <person name="Villeneuve A.M."/>
        </authorList>
    </citation>
    <scope>NUCLEOTIDE SEQUENCE [MRNA] (ISOFORM A)</scope>
    <scope>FUNCTION</scope>
    <source>
        <strain>Bristol N2</strain>
    </source>
</reference>
<reference key="2">
    <citation type="journal article" date="1998" name="Science">
        <title>Genome sequence of the nematode C. elegans: a platform for investigating biology.</title>
        <authorList>
            <consortium name="The C. elegans sequencing consortium"/>
        </authorList>
    </citation>
    <scope>NUCLEOTIDE SEQUENCE [LARGE SCALE GENOMIC DNA]</scope>
    <source>
        <strain>Bristol N2</strain>
    </source>
</reference>
<reference key="3">
    <citation type="journal article" date="1998" name="Genomics">
        <title>Cloning and characterization of the human and Caenorhabditis elegans homologs of the Saccharomyces cerevisiae MSH5 gene.</title>
        <authorList>
            <person name="Winand N.J."/>
            <person name="Panzer J.A."/>
            <person name="Kolodner R.D."/>
        </authorList>
    </citation>
    <scope>NUCLEOTIDE SEQUENCE [MRNA] OF 1-933</scope>
</reference>
<reference key="4">
    <citation type="journal article" date="2013" name="Cell Death Differ.">
        <title>Pro-crossover factors regulate damage-dependent apoptosis in the Caenorhabditis elegans germ line.</title>
        <authorList>
            <person name="Silva N."/>
            <person name="Adamo A."/>
            <person name="Santonicola P."/>
            <person name="Martinez-Perez E."/>
            <person name="La Volpe A."/>
        </authorList>
    </citation>
    <scope>FUNCTION</scope>
</reference>
<reference key="5">
    <citation type="journal article" date="2018" name="Elife">
        <title>A compartmentalized signaling network mediates crossover control in meiosis.</title>
        <authorList>
            <person name="Zhang L."/>
            <person name="Koehler S."/>
            <person name="Rillo-Bohn R."/>
            <person name="Dernburg A.F."/>
        </authorList>
    </citation>
    <scope>SUBCELLULAR LOCATION</scope>
    <scope>TISSUE SPECIFICITY</scope>
</reference>
<reference key="6">
    <citation type="journal article" date="2018" name="PLoS Genet.">
        <title>BRCA1-BARD1 associate with the synaptonemal complex and pro-crossover factors and influence RAD-51 dynamics during Caenorhabditis elegans meiosis.</title>
        <authorList>
            <person name="Janisiw E."/>
            <person name="Dello Stritto M.R."/>
            <person name="Jantsch V."/>
            <person name="Silva N."/>
        </authorList>
    </citation>
    <scope>INTERACTION WITH BRC-1 AND BRD-1</scope>
    <scope>SUBCELLULAR LOCATION</scope>
</reference>
<reference key="7">
    <citation type="journal article" date="2018" name="PLoS Genet.">
        <title>C. elegans ZHP-4 is required at multiple distinct steps in the formation of crossovers and their transition to segregation competent chiasmata.</title>
        <authorList>
            <person name="Nguyen H."/>
            <person name="Labella S."/>
            <person name="Silva N."/>
            <person name="Jantsch V."/>
            <person name="Zetka M."/>
        </authorList>
    </citation>
    <scope>SUBCELLULAR LOCATION</scope>
</reference>
<gene>
    <name evidence="10" type="primary">msh-5</name>
    <name evidence="10" type="ORF">F09E8.3</name>
</gene>
<accession>Q19272</accession>
<accession>A0A061AKP2</accession>
<accession>Q9NB29</accession>
<organism>
    <name type="scientific">Caenorhabditis elegans</name>
    <dbReference type="NCBI Taxonomy" id="6239"/>
    <lineage>
        <taxon>Eukaryota</taxon>
        <taxon>Metazoa</taxon>
        <taxon>Ecdysozoa</taxon>
        <taxon>Nematoda</taxon>
        <taxon>Chromadorea</taxon>
        <taxon>Rhabditida</taxon>
        <taxon>Rhabditina</taxon>
        <taxon>Rhabditomorpha</taxon>
        <taxon>Rhabditoidea</taxon>
        <taxon>Rhabditidae</taxon>
        <taxon>Peloderinae</taxon>
        <taxon>Caenorhabditis</taxon>
    </lineage>
</organism>
<feature type="chain" id="PRO_0000115205" description="MutS protein homolog 5">
    <location>
        <begin position="1"/>
        <end position="1369"/>
    </location>
</feature>
<feature type="region of interest" description="Disordered" evidence="3">
    <location>
        <begin position="138"/>
        <end position="190"/>
    </location>
</feature>
<feature type="region of interest" description="Disordered" evidence="3">
    <location>
        <begin position="880"/>
        <end position="915"/>
    </location>
</feature>
<feature type="region of interest" description="Disordered" evidence="3">
    <location>
        <begin position="935"/>
        <end position="1135"/>
    </location>
</feature>
<feature type="region of interest" description="Disordered" evidence="3">
    <location>
        <begin position="1153"/>
        <end position="1182"/>
    </location>
</feature>
<feature type="region of interest" description="Disordered" evidence="3">
    <location>
        <begin position="1248"/>
        <end position="1278"/>
    </location>
</feature>
<feature type="compositionally biased region" description="Acidic residues" evidence="3">
    <location>
        <begin position="173"/>
        <end position="184"/>
    </location>
</feature>
<feature type="compositionally biased region" description="Basic and acidic residues" evidence="3">
    <location>
        <begin position="884"/>
        <end position="894"/>
    </location>
</feature>
<feature type="compositionally biased region" description="Polar residues" evidence="3">
    <location>
        <begin position="895"/>
        <end position="915"/>
    </location>
</feature>
<feature type="compositionally biased region" description="Polar residues" evidence="3">
    <location>
        <begin position="941"/>
        <end position="950"/>
    </location>
</feature>
<feature type="compositionally biased region" description="Acidic residues" evidence="3">
    <location>
        <begin position="954"/>
        <end position="967"/>
    </location>
</feature>
<feature type="compositionally biased region" description="Polar residues" evidence="3">
    <location>
        <begin position="991"/>
        <end position="1003"/>
    </location>
</feature>
<feature type="compositionally biased region" description="Low complexity" evidence="3">
    <location>
        <begin position="1024"/>
        <end position="1037"/>
    </location>
</feature>
<feature type="compositionally biased region" description="Polar residues" evidence="3">
    <location>
        <begin position="1049"/>
        <end position="1065"/>
    </location>
</feature>
<feature type="compositionally biased region" description="Basic and acidic residues" evidence="3">
    <location>
        <begin position="1073"/>
        <end position="1084"/>
    </location>
</feature>
<feature type="compositionally biased region" description="Polar residues" evidence="3">
    <location>
        <begin position="1111"/>
        <end position="1124"/>
    </location>
</feature>
<feature type="compositionally biased region" description="Polar residues" evidence="3">
    <location>
        <begin position="1153"/>
        <end position="1167"/>
    </location>
</feature>
<feature type="compositionally biased region" description="Basic and acidic residues" evidence="3">
    <location>
        <begin position="1254"/>
        <end position="1263"/>
    </location>
</feature>
<feature type="binding site" evidence="2">
    <location>
        <begin position="639"/>
        <end position="646"/>
    </location>
    <ligand>
        <name>ATP</name>
        <dbReference type="ChEBI" id="CHEBI:30616"/>
    </ligand>
</feature>
<feature type="splice variant" id="VSP_060676" description="In isoform b." evidence="9">
    <location>
        <begin position="1"/>
        <end position="446"/>
    </location>
</feature>
<name>MSH5_CAEEL</name>
<proteinExistence type="evidence at protein level"/>
<protein>
    <recommendedName>
        <fullName>MutS protein homolog 5</fullName>
    </recommendedName>
</protein>
<evidence type="ECO:0000250" key="1">
    <source>
        <dbReference type="UniProtKB" id="Q12175"/>
    </source>
</evidence>
<evidence type="ECO:0000255" key="2"/>
<evidence type="ECO:0000256" key="3">
    <source>
        <dbReference type="SAM" id="MobiDB-lite"/>
    </source>
</evidence>
<evidence type="ECO:0000269" key="4">
    <source>
    </source>
</evidence>
<evidence type="ECO:0000269" key="5">
    <source>
    </source>
</evidence>
<evidence type="ECO:0000269" key="6">
    <source>
    </source>
</evidence>
<evidence type="ECO:0000269" key="7">
    <source>
    </source>
</evidence>
<evidence type="ECO:0000269" key="8">
    <source>
    </source>
</evidence>
<evidence type="ECO:0000305" key="9"/>
<evidence type="ECO:0000312" key="10">
    <source>
        <dbReference type="WormBase" id="F09E8.3a"/>
    </source>
</evidence>
<evidence type="ECO:0000312" key="11">
    <source>
        <dbReference type="WormBase" id="F09E8.3b"/>
    </source>
</evidence>
<keyword id="KW-0025">Alternative splicing</keyword>
<keyword id="KW-0067">ATP-binding</keyword>
<keyword id="KW-0158">Chromosome</keyword>
<keyword id="KW-0238">DNA-binding</keyword>
<keyword id="KW-0469">Meiosis</keyword>
<keyword id="KW-0547">Nucleotide-binding</keyword>
<keyword id="KW-1185">Reference proteome</keyword>
<sequence length="1369" mass="153140">MSTRWRYYNSKRGNGFRGRGRGRGRGTSLTAVALPRDDNFHKGAQDGAYFKDMPMDPEQFRDETVLSLSFAQGMLGAAYYEQSSQLLKIMNDISEDLEFRFLKRLIDDVKPTLIIANRSQDLEFIKFLTTRYDPQEKIYEDGTTEEGTSEDTVPTWDSSLAYSTDETTAEKEEKEEDEDDDDEGLPAKLNKLPNNFFRMSRAIERLKAMAGSHDSSMTEEDKYIIIKMRFDIEAVNMIRSFGALLLFLDETRMGVTDDPLSVTSPIKSIKTFTLGNLVEIDFNTIQALDILPKETENKKTFGQGRSLYQLMDKCRSTVGKKCLRKWFRNPTTDRDDLVSRQKCVHYFKQDWNAEVTAKLSSILGRVKALNSVFQKFQSGTAQLIHWECFVSTVNALVEILNIIRQTPISKEFPVESDLLREVSEIAVIAGSIINFAESKIQGRVTVMNGIDEELDEIRDTYENMPMVLTAIAKQEEARLGLPPYSNVACVYIPLVGFVLSVPRDYGVESQPDMTLLYSTHEDLRVRNATTSRLDDEFGDILMRLIDSQTAIILTLKTRVMKKKRSIIKLLSIASRIDVLISFGLIAAQNGWNCPALVDEPVIEAVELYHPISVLVVKKSFVPNQVSSGRDGIKASIITGPNACGKSVYMKSIGIMVFLSHIGSFVPARHAKIGIVDRIVTRMFTVDSVLDGMSTFAKDVEQVALALRKATGNSLVIIDEFGKGTMTEVGLSLLASVMTYWMNRGADRCPHIFLSSHFHALPNYIPLETNIATFLTFTVLREAGGKIKYLFRMTPGLVDCSFALSVAKEEGIPPPVIGRACRIYKALKAGTLLKEIKAEVSNDNEKQLVEDMDVVLADEDGFMAAVESFVKRKKTSFCESSMRNVSEEIEKERSEASTPASKSRSTITARSNSVLSSRSMASVDQLSVLDALLPKKKKKKVTGSSMESSMSPDPFQEEDEGTEGEEDQISAPVSRPTLPSVQKYASEEEKQQSINSRHSFSTRTAIHIPTPIQMGEAGGVKRPRSTSTSSPGPSASKSVRTEVFKKTPNVKESQVLETPKQLSISSFLEPKFPSSEKDVISRVSERYLQSDPFKTPISDRRSQQSSRHSTPKNRSMNQSLIQSARDTPHETIRSSNEVNPEFFNIFNFPDDSILKSQDTYDPNVTPRSSSRRELRPDVSHSQNSQFGEVFSELGTQFSIFNSQQSFPGNSMGTTNPDCSIFDDFFANSQDGEKKIDSTKTSMPIVNSDNFIFKTPEPRSSEKQRSLLKNKGQASNSSISPSSLILGQLAFGDVDQTPRPRGDNPIEFQYDVVDDDDPIFEEKNCSAPVFEFLKSNDDEEDDEFLKSFLETEGSLHIDTSADETIDRSKRS</sequence>